<protein>
    <recommendedName>
        <fullName>Uncharacterized protein RC0108</fullName>
    </recommendedName>
</protein>
<reference key="1">
    <citation type="journal article" date="2001" name="Science">
        <title>Mechanisms of evolution in Rickettsia conorii and R. prowazekii.</title>
        <authorList>
            <person name="Ogata H."/>
            <person name="Audic S."/>
            <person name="Renesto-Audiffren P."/>
            <person name="Fournier P.-E."/>
            <person name="Barbe V."/>
            <person name="Samson D."/>
            <person name="Roux V."/>
            <person name="Cossart P."/>
            <person name="Weissenbach J."/>
            <person name="Claverie J.-M."/>
            <person name="Raoult D."/>
        </authorList>
    </citation>
    <scope>NUCLEOTIDE SEQUENCE [LARGE SCALE GENOMIC DNA]</scope>
    <source>
        <strain>ATCC VR-613 / Malish 7</strain>
    </source>
</reference>
<sequence>MAMRLVTAEEIPKLHKLVQDNKMILACQTKEKTLKILSDYLQKEFGMHANETTIASYDGYI</sequence>
<dbReference type="EMBL" id="AE006914">
    <property type="protein sequence ID" value="AAL02646.1"/>
    <property type="molecule type" value="Genomic_DNA"/>
</dbReference>
<dbReference type="PIR" id="D97713">
    <property type="entry name" value="D97713"/>
</dbReference>
<dbReference type="SMR" id="Q92JF9"/>
<dbReference type="KEGG" id="rco:RC0108"/>
<dbReference type="HOGENOM" id="CLU_2919827_0_0_5"/>
<dbReference type="Proteomes" id="UP000000816">
    <property type="component" value="Chromosome"/>
</dbReference>
<name>Y108_RICCN</name>
<proteinExistence type="predicted"/>
<gene>
    <name type="ordered locus">RC0108</name>
</gene>
<organism>
    <name type="scientific">Rickettsia conorii (strain ATCC VR-613 / Malish 7)</name>
    <dbReference type="NCBI Taxonomy" id="272944"/>
    <lineage>
        <taxon>Bacteria</taxon>
        <taxon>Pseudomonadati</taxon>
        <taxon>Pseudomonadota</taxon>
        <taxon>Alphaproteobacteria</taxon>
        <taxon>Rickettsiales</taxon>
        <taxon>Rickettsiaceae</taxon>
        <taxon>Rickettsieae</taxon>
        <taxon>Rickettsia</taxon>
        <taxon>spotted fever group</taxon>
    </lineage>
</organism>
<accession>Q92JF9</accession>
<feature type="chain" id="PRO_0000101451" description="Uncharacterized protein RC0108">
    <location>
        <begin position="1"/>
        <end position="61"/>
    </location>
</feature>